<sequence>MIRGSSALKSLTSRRLYSTGVKYTTLSNGVTVATETNPAAKTSSVGLFFGAGSRSEHSHSNGISALTTNVLASQSAKGSLLTAKNDREFNGIIAQTTNDNITEAGKLIASIASNAVDIVEKTDLTKHKQYLSAQASAVEADPKSKVLSHLYSSAFQGYSLALPTLGTTESVENLENQDSLRHLAKHLVNNNTVIAASGNFDHDKLADAIEANLKIAEGVKPEIKPASFLGSEVRMRDDTLPKAYISIAVHGEGLNSPNYYLAKVAAAIYGDFYLHSTIAKFTSPKLASIVQEYNIVESYNHYSKSFSDTGIWGYYAEIADKFTVDDFTHFSLKEWNRLSISISEAEVARAKAQVKTALAKELANSFAVTSDIAEKVLLVGHRQSLREAFEKIDAIKVNDVKEWGKSKVWDRDIVISGTGLIEDLLDYNRNRNEMAMMRW</sequence>
<keyword id="KW-0002">3D-structure</keyword>
<keyword id="KW-0249">Electron transport</keyword>
<keyword id="KW-0472">Membrane</keyword>
<keyword id="KW-0496">Mitochondrion</keyword>
<keyword id="KW-0999">Mitochondrion inner membrane</keyword>
<keyword id="KW-1185">Reference proteome</keyword>
<keyword id="KW-0679">Respiratory chain</keyword>
<keyword id="KW-0809">Transit peptide</keyword>
<keyword id="KW-0813">Transport</keyword>
<accession>A0A1D8PP59</accession>
<name>QCR1_CANAL</name>
<reference key="1">
    <citation type="journal article" date="2004" name="Proc. Natl. Acad. Sci. U.S.A.">
        <title>The diploid genome sequence of Candida albicans.</title>
        <authorList>
            <person name="Jones T."/>
            <person name="Federspiel N.A."/>
            <person name="Chibana H."/>
            <person name="Dungan J."/>
            <person name="Kalman S."/>
            <person name="Magee B.B."/>
            <person name="Newport G."/>
            <person name="Thorstenson Y.R."/>
            <person name="Agabian N."/>
            <person name="Magee P.T."/>
            <person name="Davis R.W."/>
            <person name="Scherer S."/>
        </authorList>
    </citation>
    <scope>NUCLEOTIDE SEQUENCE [LARGE SCALE GENOMIC DNA]</scope>
    <source>
        <strain>SC5314 / ATCC MYA-2876</strain>
    </source>
</reference>
<reference key="2">
    <citation type="journal article" date="2007" name="Genome Biol.">
        <title>Assembly of the Candida albicans genome into sixteen supercontigs aligned on the eight chromosomes.</title>
        <authorList>
            <person name="van het Hoog M."/>
            <person name="Rast T.J."/>
            <person name="Martchenko M."/>
            <person name="Grindle S."/>
            <person name="Dignard D."/>
            <person name="Hogues H."/>
            <person name="Cuomo C."/>
            <person name="Berriman M."/>
            <person name="Scherer S."/>
            <person name="Magee B.B."/>
            <person name="Whiteway M."/>
            <person name="Chibana H."/>
            <person name="Nantel A."/>
            <person name="Magee P.T."/>
        </authorList>
    </citation>
    <scope>GENOME REANNOTATION</scope>
    <source>
        <strain>SC5314 / ATCC MYA-2876</strain>
    </source>
</reference>
<reference key="3">
    <citation type="journal article" date="2013" name="Genome Biol.">
        <title>Assembly of a phased diploid Candida albicans genome facilitates allele-specific measurements and provides a simple model for repeat and indel structure.</title>
        <authorList>
            <person name="Muzzey D."/>
            <person name="Schwartz K."/>
            <person name="Weissman J.S."/>
            <person name="Sherlock G."/>
        </authorList>
    </citation>
    <scope>NUCLEOTIDE SEQUENCE [LARGE SCALE GENOMIC DNA]</scope>
    <scope>GENOME REANNOTATION</scope>
    <source>
        <strain>SC5314 / ATCC MYA-2876</strain>
    </source>
</reference>
<reference key="4">
    <citation type="journal article" date="2005" name="Antimicrob. Agents Chemother.">
        <title>Genome-wide expression profiling of the response to azole, polyene, echinocandin, and pyrimidine antifungal agents in Candida albicans.</title>
        <authorList>
            <person name="Liu T.T."/>
            <person name="Lee R.E."/>
            <person name="Barker K.S."/>
            <person name="Lee R.E."/>
            <person name="Wei L."/>
            <person name="Homayouni R."/>
            <person name="Rogers P.D."/>
        </authorList>
    </citation>
    <scope>INDUCTION</scope>
</reference>
<reference key="5">
    <citation type="journal article" date="2005" name="Mol. Biol. Cell">
        <title>Transcriptional response of Candida albicans to nitric oxide and the role of the YHB1 gene in nitrosative stress and virulence.</title>
        <authorList>
            <person name="Hromatka B.S."/>
            <person name="Noble S.M."/>
            <person name="Johnson A.D."/>
        </authorList>
    </citation>
    <scope>INDUCTION</scope>
</reference>
<reference key="6">
    <citation type="journal article" date="2011" name="J. Biol. Chem.">
        <title>Cap2-HAP complex is a critical transcriptional regulator that has dual but contrasting roles in regulation of iron homeostasis in Candida albicans.</title>
        <authorList>
            <person name="Singh R.P."/>
            <person name="Prasad H.K."/>
            <person name="Sinha I."/>
            <person name="Agarwal N."/>
            <person name="Natarajan K."/>
        </authorList>
    </citation>
    <scope>INDUCTION</scope>
</reference>
<reference key="7">
    <citation type="journal article" date="2012" name="Cell">
        <title>A recently evolved transcriptional network controls biofilm development in Candida albicans.</title>
        <authorList>
            <person name="Nobile C.J."/>
            <person name="Fox E.P."/>
            <person name="Nett J.E."/>
            <person name="Sorrells T.R."/>
            <person name="Mitrovich Q.M."/>
            <person name="Hernday A.D."/>
            <person name="Tuch B.B."/>
            <person name="Andes D.R."/>
            <person name="Johnson A.D."/>
        </authorList>
    </citation>
    <scope>INDUCTION</scope>
</reference>
<reference key="8">
    <citation type="journal article" date="2023" name="Front. Cell. Infect. Microbiol.">
        <title>QCR7 affects the virulence of Candida albicans and the uptake of multiple carbon sources present in different host niches.</title>
        <authorList>
            <person name="Zeng L."/>
            <person name="Huang Y."/>
            <person name="Tan J."/>
            <person name="Peng J."/>
            <person name="Hu N."/>
            <person name="Liu Q."/>
            <person name="Cao Y."/>
            <person name="Zhang Y."/>
            <person name="Chen J."/>
            <person name="Huang X."/>
        </authorList>
    </citation>
    <scope>FUNCTION</scope>
    <scope>DISRUPTION PHENOTYPE</scope>
</reference>
<reference evidence="11 12 13 14 15" key="9">
    <citation type="journal article" date="2022" name="Structure">
        <title>Rieske head domain dynamics and indazole-derivative inhibition of Candida albicans complex III.</title>
        <authorList>
            <person name="Di Trani J.M."/>
            <person name="Liu Z."/>
            <person name="Whitesell L."/>
            <person name="Brzezinski P."/>
            <person name="Cowen L.E."/>
            <person name="Rubinstein J.L."/>
        </authorList>
    </citation>
    <scope>STRUCTURE BY ELECTRON MICROSCOPY (3.00 ANGSTROMS) OF THE HOMODIMERIC RESPIRATORY COMPLEX III</scope>
    <scope>FUNCTION</scope>
    <scope>SUBUNIT</scope>
</reference>
<dbReference type="EMBL" id="CP017627">
    <property type="protein sequence ID" value="AOW29927.1"/>
    <property type="molecule type" value="Genomic_DNA"/>
</dbReference>
<dbReference type="RefSeq" id="XP_721924.2">
    <property type="nucleotide sequence ID" value="XM_716831.2"/>
</dbReference>
<dbReference type="PDB" id="7RJA">
    <property type="method" value="EM"/>
    <property type="resolution" value="3.00 A"/>
    <property type="chains" value="A/J=1-439"/>
</dbReference>
<dbReference type="PDB" id="7RJB">
    <property type="method" value="EM"/>
    <property type="resolution" value="3.20 A"/>
    <property type="chains" value="A=1-439"/>
</dbReference>
<dbReference type="PDB" id="7RJC">
    <property type="method" value="EM"/>
    <property type="resolution" value="3.30 A"/>
    <property type="chains" value="A=1-439"/>
</dbReference>
<dbReference type="PDB" id="7RJD">
    <property type="method" value="EM"/>
    <property type="resolution" value="3.20 A"/>
    <property type="chains" value="A=1-439"/>
</dbReference>
<dbReference type="PDB" id="7RJE">
    <property type="method" value="EM"/>
    <property type="resolution" value="3.30 A"/>
    <property type="chains" value="A/E=1-439"/>
</dbReference>
<dbReference type="PDBsum" id="7RJA"/>
<dbReference type="PDBsum" id="7RJB"/>
<dbReference type="PDBsum" id="7RJC"/>
<dbReference type="PDBsum" id="7RJD"/>
<dbReference type="PDBsum" id="7RJE"/>
<dbReference type="EMDB" id="EMD-24482"/>
<dbReference type="EMDB" id="EMD-24483"/>
<dbReference type="EMDB" id="EMD-24484"/>
<dbReference type="EMDB" id="EMD-24485"/>
<dbReference type="EMDB" id="EMD-24486"/>
<dbReference type="SMR" id="A0A1D8PP59"/>
<dbReference type="FunCoup" id="A0A1D8PP59">
    <property type="interactions" value="434"/>
</dbReference>
<dbReference type="STRING" id="237561.A0A1D8PP59"/>
<dbReference type="EnsemblFungi" id="C5_05230C_A-T">
    <property type="protein sequence ID" value="C5_05230C_A-T-p1"/>
    <property type="gene ID" value="C5_05230C_A"/>
</dbReference>
<dbReference type="GeneID" id="3636470"/>
<dbReference type="KEGG" id="cal:CAALFM_C505230CA"/>
<dbReference type="CGD" id="CAL0000196656">
    <property type="gene designation" value="COR1"/>
</dbReference>
<dbReference type="VEuPathDB" id="FungiDB:C5_05230C_A"/>
<dbReference type="eggNOG" id="KOG0960">
    <property type="taxonomic scope" value="Eukaryota"/>
</dbReference>
<dbReference type="InParanoid" id="A0A1D8PP59"/>
<dbReference type="OMA" id="DSGLWGF"/>
<dbReference type="OrthoDB" id="10251424at2759"/>
<dbReference type="Proteomes" id="UP000000559">
    <property type="component" value="Chromosome 5"/>
</dbReference>
<dbReference type="GO" id="GO:0005743">
    <property type="term" value="C:mitochondrial inner membrane"/>
    <property type="evidence" value="ECO:0007669"/>
    <property type="project" value="UniProtKB-SubCell"/>
</dbReference>
<dbReference type="GO" id="GO:0005739">
    <property type="term" value="C:mitochondrion"/>
    <property type="evidence" value="ECO:0000318"/>
    <property type="project" value="GO_Central"/>
</dbReference>
<dbReference type="GO" id="GO:0045275">
    <property type="term" value="C:respiratory chain complex III"/>
    <property type="evidence" value="ECO:0007669"/>
    <property type="project" value="EnsemblFungi"/>
</dbReference>
<dbReference type="GO" id="GO:0046872">
    <property type="term" value="F:metal ion binding"/>
    <property type="evidence" value="ECO:0007669"/>
    <property type="project" value="InterPro"/>
</dbReference>
<dbReference type="GO" id="GO:0004222">
    <property type="term" value="F:metalloendopeptidase activity"/>
    <property type="evidence" value="ECO:0000318"/>
    <property type="project" value="GO_Central"/>
</dbReference>
<dbReference type="GO" id="GO:0008121">
    <property type="term" value="F:ubiquinol-cytochrome-c reductase activity"/>
    <property type="evidence" value="ECO:0007669"/>
    <property type="project" value="EnsemblFungi"/>
</dbReference>
<dbReference type="GO" id="GO:0009060">
    <property type="term" value="P:aerobic respiration"/>
    <property type="evidence" value="ECO:0000318"/>
    <property type="project" value="GO_Central"/>
</dbReference>
<dbReference type="GO" id="GO:0006122">
    <property type="term" value="P:mitochondrial electron transport, ubiquinol to cytochrome c"/>
    <property type="evidence" value="ECO:0007669"/>
    <property type="project" value="EnsemblFungi"/>
</dbReference>
<dbReference type="GO" id="GO:0006627">
    <property type="term" value="P:protein processing involved in protein targeting to mitochondrion"/>
    <property type="evidence" value="ECO:0000318"/>
    <property type="project" value="GO_Central"/>
</dbReference>
<dbReference type="FunFam" id="3.30.830.10:FF:000001">
    <property type="entry name" value="Mitochondrial-processing peptidase subunit beta, mitochondrial"/>
    <property type="match status" value="1"/>
</dbReference>
<dbReference type="Gene3D" id="3.30.830.10">
    <property type="entry name" value="Metalloenzyme, LuxS/M16 peptidase-like"/>
    <property type="match status" value="2"/>
</dbReference>
<dbReference type="InterPro" id="IPR011249">
    <property type="entry name" value="Metalloenz_LuxS/M16"/>
</dbReference>
<dbReference type="InterPro" id="IPR050361">
    <property type="entry name" value="MPP/UQCRC_Complex"/>
</dbReference>
<dbReference type="InterPro" id="IPR011765">
    <property type="entry name" value="Pept_M16_N"/>
</dbReference>
<dbReference type="InterPro" id="IPR007863">
    <property type="entry name" value="Peptidase_M16_C"/>
</dbReference>
<dbReference type="PANTHER" id="PTHR11851:SF126">
    <property type="entry name" value="CYTOCHROME B-C1 COMPLEX SUBUNIT 1, MITOCHONDRIAL"/>
    <property type="match status" value="1"/>
</dbReference>
<dbReference type="PANTHER" id="PTHR11851">
    <property type="entry name" value="METALLOPROTEASE"/>
    <property type="match status" value="1"/>
</dbReference>
<dbReference type="Pfam" id="PF00675">
    <property type="entry name" value="Peptidase_M16"/>
    <property type="match status" value="1"/>
</dbReference>
<dbReference type="Pfam" id="PF05193">
    <property type="entry name" value="Peptidase_M16_C"/>
    <property type="match status" value="1"/>
</dbReference>
<dbReference type="SUPFAM" id="SSF63411">
    <property type="entry name" value="LuxS/MPP-like metallohydrolase"/>
    <property type="match status" value="2"/>
</dbReference>
<gene>
    <name evidence="9" type="primary">COR1</name>
    <name type="ordered locus">CAALFM_C505230CA</name>
    <name type="ordered locus">orf19.11499</name>
</gene>
<proteinExistence type="evidence at protein level"/>
<protein>
    <recommendedName>
        <fullName evidence="9">Cytochrome b-c1 complex reductase subunit, mitochondrial</fullName>
    </recommendedName>
    <alternativeName>
        <fullName evidence="9">Complex III reductase subunit</fullName>
    </alternativeName>
</protein>
<evidence type="ECO:0000250" key="1">
    <source>
        <dbReference type="UniProtKB" id="P07256"/>
    </source>
</evidence>
<evidence type="ECO:0000255" key="2"/>
<evidence type="ECO:0000269" key="3">
    <source>
    </source>
</evidence>
<evidence type="ECO:0000269" key="4">
    <source>
    </source>
</evidence>
<evidence type="ECO:0000269" key="5">
    <source>
    </source>
</evidence>
<evidence type="ECO:0000269" key="6">
    <source>
    </source>
</evidence>
<evidence type="ECO:0000269" key="7">
    <source>
    </source>
</evidence>
<evidence type="ECO:0000269" key="8">
    <source>
    </source>
</evidence>
<evidence type="ECO:0000303" key="9">
    <source>
    </source>
</evidence>
<evidence type="ECO:0000305" key="10"/>
<evidence type="ECO:0007744" key="11">
    <source>
        <dbReference type="PDB" id="7RJA"/>
    </source>
</evidence>
<evidence type="ECO:0007744" key="12">
    <source>
        <dbReference type="PDB" id="7RJB"/>
    </source>
</evidence>
<evidence type="ECO:0007744" key="13">
    <source>
        <dbReference type="PDB" id="7RJC"/>
    </source>
</evidence>
<evidence type="ECO:0007744" key="14">
    <source>
        <dbReference type="PDB" id="7RJD"/>
    </source>
</evidence>
<evidence type="ECO:0007744" key="15">
    <source>
        <dbReference type="PDB" id="7RJE"/>
    </source>
</evidence>
<evidence type="ECO:0007829" key="16">
    <source>
        <dbReference type="PDB" id="7RJA"/>
    </source>
</evidence>
<organism>
    <name type="scientific">Candida albicans (strain SC5314 / ATCC MYA-2876)</name>
    <name type="common">Yeast</name>
    <dbReference type="NCBI Taxonomy" id="237561"/>
    <lineage>
        <taxon>Eukaryota</taxon>
        <taxon>Fungi</taxon>
        <taxon>Dikarya</taxon>
        <taxon>Ascomycota</taxon>
        <taxon>Saccharomycotina</taxon>
        <taxon>Pichiomycetes</taxon>
        <taxon>Debaryomycetaceae</taxon>
        <taxon>Candida/Lodderomyces clade</taxon>
        <taxon>Candida</taxon>
    </lineage>
</organism>
<feature type="transit peptide" description="Mitochondrion" evidence="2">
    <location>
        <begin position="1"/>
        <end position="17"/>
    </location>
</feature>
<feature type="chain" id="PRO_0000459229" description="Cytochrome b-c1 complex reductase subunit, mitochondrial" evidence="2">
    <location>
        <begin position="18"/>
        <end position="439"/>
    </location>
</feature>
<feature type="strand" evidence="16">
    <location>
        <begin position="23"/>
        <end position="25"/>
    </location>
</feature>
<feature type="helix" evidence="16">
    <location>
        <begin position="27"/>
        <end position="29"/>
    </location>
</feature>
<feature type="strand" evidence="16">
    <location>
        <begin position="31"/>
        <end position="36"/>
    </location>
</feature>
<feature type="strand" evidence="16">
    <location>
        <begin position="41"/>
        <end position="48"/>
    </location>
</feature>
<feature type="helix" evidence="16">
    <location>
        <begin position="53"/>
        <end position="55"/>
    </location>
</feature>
<feature type="turn" evidence="16">
    <location>
        <begin position="59"/>
        <end position="62"/>
    </location>
</feature>
<feature type="helix" evidence="16">
    <location>
        <begin position="63"/>
        <end position="72"/>
    </location>
</feature>
<feature type="strand" evidence="16">
    <location>
        <begin position="79"/>
        <end position="83"/>
    </location>
</feature>
<feature type="strand" evidence="16">
    <location>
        <begin position="91"/>
        <end position="96"/>
    </location>
</feature>
<feature type="helix" evidence="16">
    <location>
        <begin position="98"/>
        <end position="100"/>
    </location>
</feature>
<feature type="helix" evidence="16">
    <location>
        <begin position="101"/>
        <end position="113"/>
    </location>
</feature>
<feature type="helix" evidence="16">
    <location>
        <begin position="115"/>
        <end position="120"/>
    </location>
</feature>
<feature type="helix" evidence="16">
    <location>
        <begin position="124"/>
        <end position="138"/>
    </location>
</feature>
<feature type="helix" evidence="16">
    <location>
        <begin position="142"/>
        <end position="154"/>
    </location>
</feature>
<feature type="turn" evidence="16">
    <location>
        <begin position="155"/>
        <end position="157"/>
    </location>
</feature>
<feature type="helix" evidence="16">
    <location>
        <begin position="159"/>
        <end position="161"/>
    </location>
</feature>
<feature type="helix" evidence="16">
    <location>
        <begin position="168"/>
        <end position="171"/>
    </location>
</feature>
<feature type="helix" evidence="16">
    <location>
        <begin position="176"/>
        <end position="186"/>
    </location>
</feature>
<feature type="helix" evidence="16">
    <location>
        <begin position="189"/>
        <end position="191"/>
    </location>
</feature>
<feature type="strand" evidence="16">
    <location>
        <begin position="193"/>
        <end position="200"/>
    </location>
</feature>
<feature type="helix" evidence="16">
    <location>
        <begin position="202"/>
        <end position="210"/>
    </location>
</feature>
<feature type="strand" evidence="16">
    <location>
        <begin position="231"/>
        <end position="234"/>
    </location>
</feature>
<feature type="strand" evidence="16">
    <location>
        <begin position="240"/>
        <end position="250"/>
    </location>
</feature>
<feature type="helix" evidence="16">
    <location>
        <begin position="259"/>
        <end position="269"/>
    </location>
</feature>
<feature type="strand" evidence="16">
    <location>
        <begin position="271"/>
        <end position="273"/>
    </location>
</feature>
<feature type="helix" evidence="16">
    <location>
        <begin position="277"/>
        <end position="280"/>
    </location>
</feature>
<feature type="helix" evidence="16">
    <location>
        <begin position="285"/>
        <end position="290"/>
    </location>
</feature>
<feature type="turn" evidence="16">
    <location>
        <begin position="291"/>
        <end position="294"/>
    </location>
</feature>
<feature type="strand" evidence="16">
    <location>
        <begin position="297"/>
        <end position="305"/>
    </location>
</feature>
<feature type="strand" evidence="16">
    <location>
        <begin position="310"/>
        <end position="320"/>
    </location>
</feature>
<feature type="helix" evidence="16">
    <location>
        <begin position="321"/>
        <end position="323"/>
    </location>
</feature>
<feature type="helix" evidence="16">
    <location>
        <begin position="324"/>
        <end position="338"/>
    </location>
</feature>
<feature type="helix" evidence="16">
    <location>
        <begin position="344"/>
        <end position="361"/>
    </location>
</feature>
<feature type="helix" evidence="16">
    <location>
        <begin position="365"/>
        <end position="378"/>
    </location>
</feature>
<feature type="helix" evidence="16">
    <location>
        <begin position="385"/>
        <end position="393"/>
    </location>
</feature>
<feature type="helix" evidence="16">
    <location>
        <begin position="397"/>
        <end position="407"/>
    </location>
</feature>
<feature type="turn" evidence="16">
    <location>
        <begin position="408"/>
        <end position="410"/>
    </location>
</feature>
<feature type="strand" evidence="16">
    <location>
        <begin position="413"/>
        <end position="417"/>
    </location>
</feature>
<feature type="helix" evidence="16">
    <location>
        <begin position="421"/>
        <end position="423"/>
    </location>
</feature>
<feature type="helix" evidence="16">
    <location>
        <begin position="427"/>
        <end position="432"/>
    </location>
</feature>
<comment type="function">
    <text evidence="7 8">Component of the ubiquinol-cytochrome c oxidoreductase, a multisubunit transmembrane complex that is part of the mitochondrial electron transport chain which drives oxidative phosphorylation (PubMed:34525326, PubMed:36923588). The complex plays an important role in the uptake of multiple carbon sources present in different host niches (PubMed:36923588).</text>
</comment>
<comment type="subunit">
    <text evidence="7">Component of the ubiquinol-cytochrome c oxidoreductase (cytochrome b-c1 complex, complex III, CIII), a multisubunit enzyme composed of 10 subunits. The complex is composed of 3 respiratory subunits cytochrome b (COB), cytochrome c1 (CYT1) and Rieske protein (RIP1), 2 core protein subunits COR1 and QCR2, and 5 low-molecular weight protein subunits QCR6, QCR7, QCR8, QCR9 and QCR10. The complex exists as an obligatory dimer and forms supercomplexes (SCs) in the inner mitochondrial membrane with a monomer or a dimer of cytochrome c oxidase (complex IV, CIV), resulting in 2 different assemblies (supercomplexes III(2)IV and III(2)IV(2)).</text>
</comment>
<comment type="subcellular location">
    <subcellularLocation>
        <location evidence="1">Mitochondrion inner membrane</location>
        <topology evidence="1">Peripheral membrane protein</topology>
        <orientation evidence="1">Matrix side</orientation>
    </subcellularLocation>
</comment>
<comment type="induction">
    <text evidence="3 4 5 6">Expression is induced in the presence of amphotericin B (PubMed:15917516). Expression is repressed by niric oxide and during spider biofilm formation (PubMed:16030247, PubMed:22265407). Expression is also repressed by HAP43 (PubMed:21592964).</text>
</comment>
<comment type="disruption phenotype">
    <text evidence="8">Leads to decreased vegetative growth on several carbon sources including maltose, citrate and acetate.</text>
</comment>
<comment type="similarity">
    <text evidence="10">Belongs to the peptidase M16 family. UQCRC1/QCR1 subfamily.</text>
</comment>